<evidence type="ECO:0000250" key="1"/>
<evidence type="ECO:0000255" key="2">
    <source>
        <dbReference type="HAMAP-Rule" id="MF_00100"/>
    </source>
</evidence>
<protein>
    <recommendedName>
        <fullName evidence="2">Translation initiation factor IF-2</fullName>
    </recommendedName>
</protein>
<accession>Q7VQM3</accession>
<comment type="function">
    <text evidence="2">One of the essential components for the initiation of protein synthesis. Protects formylmethionyl-tRNA from spontaneous hydrolysis and promotes its binding to the 30S ribosomal subunits. Also involved in the hydrolysis of GTP during the formation of the 70S ribosomal complex.</text>
</comment>
<comment type="subcellular location">
    <subcellularLocation>
        <location evidence="2">Cytoplasm</location>
    </subcellularLocation>
</comment>
<comment type="similarity">
    <text evidence="2">Belongs to the TRAFAC class translation factor GTPase superfamily. Classic translation factor GTPase family. IF-2 subfamily.</text>
</comment>
<feature type="chain" id="PRO_0000137185" description="Translation initiation factor IF-2">
    <location>
        <begin position="1"/>
        <end position="897"/>
    </location>
</feature>
<feature type="domain" description="tr-type G">
    <location>
        <begin position="402"/>
        <end position="570"/>
    </location>
</feature>
<feature type="region of interest" description="G1" evidence="1">
    <location>
        <begin position="411"/>
        <end position="418"/>
    </location>
</feature>
<feature type="region of interest" description="G2" evidence="1">
    <location>
        <begin position="436"/>
        <end position="440"/>
    </location>
</feature>
<feature type="region of interest" description="G3" evidence="1">
    <location>
        <begin position="458"/>
        <end position="461"/>
    </location>
</feature>
<feature type="region of interest" description="G4" evidence="1">
    <location>
        <begin position="512"/>
        <end position="515"/>
    </location>
</feature>
<feature type="region of interest" description="G5" evidence="1">
    <location>
        <begin position="548"/>
        <end position="550"/>
    </location>
</feature>
<feature type="binding site" evidence="2">
    <location>
        <begin position="411"/>
        <end position="418"/>
    </location>
    <ligand>
        <name>GTP</name>
        <dbReference type="ChEBI" id="CHEBI:37565"/>
    </ligand>
</feature>
<feature type="binding site" evidence="2">
    <location>
        <begin position="458"/>
        <end position="462"/>
    </location>
    <ligand>
        <name>GTP</name>
        <dbReference type="ChEBI" id="CHEBI:37565"/>
    </ligand>
</feature>
<feature type="binding site" evidence="2">
    <location>
        <begin position="512"/>
        <end position="515"/>
    </location>
    <ligand>
        <name>GTP</name>
        <dbReference type="ChEBI" id="CHEBI:37565"/>
    </ligand>
</feature>
<name>IF2_BLOFL</name>
<reference key="1">
    <citation type="journal article" date="2003" name="Proc. Natl. Acad. Sci. U.S.A.">
        <title>The genome sequence of Blochmannia floridanus: comparative analysis of reduced genomes.</title>
        <authorList>
            <person name="Gil R."/>
            <person name="Silva F.J."/>
            <person name="Zientz E."/>
            <person name="Delmotte F."/>
            <person name="Gonzalez-Candelas F."/>
            <person name="Latorre A."/>
            <person name="Rausell C."/>
            <person name="Kamerbeek J."/>
            <person name="Gadau J."/>
            <person name="Hoelldobler B."/>
            <person name="van Ham R.C.H.J."/>
            <person name="Gross R."/>
            <person name="Moya A."/>
        </authorList>
    </citation>
    <scope>NUCLEOTIDE SEQUENCE [LARGE SCALE GENOMIC DNA]</scope>
</reference>
<keyword id="KW-0963">Cytoplasm</keyword>
<keyword id="KW-0342">GTP-binding</keyword>
<keyword id="KW-0396">Initiation factor</keyword>
<keyword id="KW-0547">Nucleotide-binding</keyword>
<keyword id="KW-0648">Protein biosynthesis</keyword>
<keyword id="KW-1185">Reference proteome</keyword>
<gene>
    <name evidence="2" type="primary">infB</name>
    <name type="ordered locus">Bfl104</name>
</gene>
<dbReference type="EMBL" id="BX248583">
    <property type="protein sequence ID" value="CAD83625.1"/>
    <property type="molecule type" value="Genomic_DNA"/>
</dbReference>
<dbReference type="SMR" id="Q7VQM3"/>
<dbReference type="STRING" id="203907.Bfl104"/>
<dbReference type="KEGG" id="bfl:Bfl104"/>
<dbReference type="eggNOG" id="COG0532">
    <property type="taxonomic scope" value="Bacteria"/>
</dbReference>
<dbReference type="HOGENOM" id="CLU_006301_6_3_6"/>
<dbReference type="OrthoDB" id="9811804at2"/>
<dbReference type="Proteomes" id="UP000002192">
    <property type="component" value="Chromosome"/>
</dbReference>
<dbReference type="GO" id="GO:0005829">
    <property type="term" value="C:cytosol"/>
    <property type="evidence" value="ECO:0007669"/>
    <property type="project" value="TreeGrafter"/>
</dbReference>
<dbReference type="GO" id="GO:0005525">
    <property type="term" value="F:GTP binding"/>
    <property type="evidence" value="ECO:0007669"/>
    <property type="project" value="UniProtKB-KW"/>
</dbReference>
<dbReference type="GO" id="GO:0003924">
    <property type="term" value="F:GTPase activity"/>
    <property type="evidence" value="ECO:0007669"/>
    <property type="project" value="UniProtKB-UniRule"/>
</dbReference>
<dbReference type="GO" id="GO:0003743">
    <property type="term" value="F:translation initiation factor activity"/>
    <property type="evidence" value="ECO:0007669"/>
    <property type="project" value="UniProtKB-UniRule"/>
</dbReference>
<dbReference type="CDD" id="cd01887">
    <property type="entry name" value="IF2_eIF5B"/>
    <property type="match status" value="1"/>
</dbReference>
<dbReference type="CDD" id="cd03702">
    <property type="entry name" value="IF2_mtIF2_II"/>
    <property type="match status" value="1"/>
</dbReference>
<dbReference type="CDD" id="cd03692">
    <property type="entry name" value="mtIF2_IVc"/>
    <property type="match status" value="1"/>
</dbReference>
<dbReference type="FunFam" id="2.40.30.10:FF:000007">
    <property type="entry name" value="Translation initiation factor IF-2"/>
    <property type="match status" value="1"/>
</dbReference>
<dbReference type="FunFam" id="2.40.30.10:FF:000008">
    <property type="entry name" value="Translation initiation factor IF-2"/>
    <property type="match status" value="1"/>
</dbReference>
<dbReference type="FunFam" id="3.40.50.10050:FF:000001">
    <property type="entry name" value="Translation initiation factor IF-2"/>
    <property type="match status" value="1"/>
</dbReference>
<dbReference type="FunFam" id="3.40.50.300:FF:000019">
    <property type="entry name" value="Translation initiation factor IF-2"/>
    <property type="match status" value="1"/>
</dbReference>
<dbReference type="Gene3D" id="3.40.50.300">
    <property type="entry name" value="P-loop containing nucleotide triphosphate hydrolases"/>
    <property type="match status" value="1"/>
</dbReference>
<dbReference type="Gene3D" id="3.30.56.50">
    <property type="entry name" value="Putative DNA-binding domain, N-terminal subdomain of bacterial translation initiation factor IF2"/>
    <property type="match status" value="1"/>
</dbReference>
<dbReference type="Gene3D" id="2.40.30.10">
    <property type="entry name" value="Translation factors"/>
    <property type="match status" value="2"/>
</dbReference>
<dbReference type="Gene3D" id="3.40.50.10050">
    <property type="entry name" value="Translation initiation factor IF- 2, domain 3"/>
    <property type="match status" value="1"/>
</dbReference>
<dbReference type="HAMAP" id="MF_00100_B">
    <property type="entry name" value="IF_2_B"/>
    <property type="match status" value="1"/>
</dbReference>
<dbReference type="InterPro" id="IPR009061">
    <property type="entry name" value="DNA-bd_dom_put_sf"/>
</dbReference>
<dbReference type="InterPro" id="IPR053905">
    <property type="entry name" value="EF-G-like_DII"/>
</dbReference>
<dbReference type="InterPro" id="IPR013575">
    <property type="entry name" value="IF2_assoc_dom_bac"/>
</dbReference>
<dbReference type="InterPro" id="IPR044145">
    <property type="entry name" value="IF2_II"/>
</dbReference>
<dbReference type="InterPro" id="IPR006847">
    <property type="entry name" value="IF2_N"/>
</dbReference>
<dbReference type="InterPro" id="IPR027417">
    <property type="entry name" value="P-loop_NTPase"/>
</dbReference>
<dbReference type="InterPro" id="IPR005225">
    <property type="entry name" value="Small_GTP-bd"/>
</dbReference>
<dbReference type="InterPro" id="IPR000795">
    <property type="entry name" value="T_Tr_GTP-bd_dom"/>
</dbReference>
<dbReference type="InterPro" id="IPR000178">
    <property type="entry name" value="TF_IF2_bacterial-like"/>
</dbReference>
<dbReference type="InterPro" id="IPR015760">
    <property type="entry name" value="TIF_IF2"/>
</dbReference>
<dbReference type="InterPro" id="IPR023115">
    <property type="entry name" value="TIF_IF2_dom3"/>
</dbReference>
<dbReference type="InterPro" id="IPR036925">
    <property type="entry name" value="TIF_IF2_dom3_sf"/>
</dbReference>
<dbReference type="InterPro" id="IPR009000">
    <property type="entry name" value="Transl_B-barrel_sf"/>
</dbReference>
<dbReference type="NCBIfam" id="TIGR00487">
    <property type="entry name" value="IF-2"/>
    <property type="match status" value="1"/>
</dbReference>
<dbReference type="NCBIfam" id="TIGR00231">
    <property type="entry name" value="small_GTP"/>
    <property type="match status" value="1"/>
</dbReference>
<dbReference type="PANTHER" id="PTHR43381:SF5">
    <property type="entry name" value="TR-TYPE G DOMAIN-CONTAINING PROTEIN"/>
    <property type="match status" value="1"/>
</dbReference>
<dbReference type="PANTHER" id="PTHR43381">
    <property type="entry name" value="TRANSLATION INITIATION FACTOR IF-2-RELATED"/>
    <property type="match status" value="1"/>
</dbReference>
<dbReference type="Pfam" id="PF22042">
    <property type="entry name" value="EF-G_D2"/>
    <property type="match status" value="1"/>
</dbReference>
<dbReference type="Pfam" id="PF00009">
    <property type="entry name" value="GTP_EFTU"/>
    <property type="match status" value="1"/>
</dbReference>
<dbReference type="Pfam" id="PF11987">
    <property type="entry name" value="IF-2"/>
    <property type="match status" value="1"/>
</dbReference>
<dbReference type="Pfam" id="PF08364">
    <property type="entry name" value="IF2_assoc"/>
    <property type="match status" value="1"/>
</dbReference>
<dbReference type="Pfam" id="PF04760">
    <property type="entry name" value="IF2_N"/>
    <property type="match status" value="2"/>
</dbReference>
<dbReference type="SUPFAM" id="SSF52156">
    <property type="entry name" value="Initiation factor IF2/eIF5b, domain 3"/>
    <property type="match status" value="1"/>
</dbReference>
<dbReference type="SUPFAM" id="SSF52540">
    <property type="entry name" value="P-loop containing nucleoside triphosphate hydrolases"/>
    <property type="match status" value="1"/>
</dbReference>
<dbReference type="SUPFAM" id="SSF46955">
    <property type="entry name" value="Putative DNA-binding domain"/>
    <property type="match status" value="1"/>
</dbReference>
<dbReference type="SUPFAM" id="SSF50447">
    <property type="entry name" value="Translation proteins"/>
    <property type="match status" value="2"/>
</dbReference>
<dbReference type="PROSITE" id="PS51722">
    <property type="entry name" value="G_TR_2"/>
    <property type="match status" value="1"/>
</dbReference>
<dbReference type="PROSITE" id="PS01176">
    <property type="entry name" value="IF2"/>
    <property type="match status" value="1"/>
</dbReference>
<sequence length="897" mass="100775">MTIQSFAIEVQMSVDYLIQQFLDIGITKTKFDFITQSEKEILFRHMNVNKIAVFNKLFLQRKTHSTLNVSSTNGKSKKVKVEVRKKRVYMVPCSIRKSHVSNNTNILLVENDNSKDKYKSDDCNELSELVACDENKISSNENQVMCFISQKEKLDHFTIRQDYVRTNELVKDVNQDLDHQIRDRKGLSNSVCCDVLLNVQDEQHDDNNFSCGLSDDMAVSNNIPEHDKQKLENVRKNLTDRLRSTRTRNLSKLVKQNKHNNSKVCMIYESDKDEKLYVLPSSRVYKNKRKQSILVQSFNKPMQKTVRDVVIGETISVAELSNKMSIKSSSMIKMMMKLGLMVTINQNLDQETAQLVVEEMGHNAILRRENALEELIMHDNNNDYQNISSKLDNAKNDMGYKNRAPIVTIMGHVDHGKTSLLDYIRSTNVASSESGGITQNIGAYCVQLANNDMVTFIDTPGHEAFTDMRARGIQLTDIVVLVVAADDGVMPQTVEAIQYIRDGNLPVIIAINKIDKSVTNVERIKNELNSYGFIPEEWGGHTQFVNVSAVSGEGVNDLLDSILVQSEILELKSMHHGLAKAVVIESSLDRSRGPVVTVLVRSGELKCGDIVLCGTEYGRVRAMRDSLGFDVIKAGPSIPVELLGLSGIPGTGEWLVVVNNEKKAREVALYRKEKKREIKLARKSEKTIIENFNSMDIIKIKELNFIIKSDTQGSMEVICESLKKLSTNKMVMKILSASIGNVTETDAVLALSSHSRILAFNVKVDLSAKNIIELNHINIQYYSVIYSLLDEVKELISSTIAPQVDFKVIGIAKVHNIFQSPRYGTIAGCMVTQGVIKLHKQIKIVRNGIIMYKGVLDSLRHFKNDVSEVKIGVECGIGIKNYSDVCSGDIIEVLDKI</sequence>
<organism>
    <name type="scientific">Blochmanniella floridana</name>
    <dbReference type="NCBI Taxonomy" id="203907"/>
    <lineage>
        <taxon>Bacteria</taxon>
        <taxon>Pseudomonadati</taxon>
        <taxon>Pseudomonadota</taxon>
        <taxon>Gammaproteobacteria</taxon>
        <taxon>Enterobacterales</taxon>
        <taxon>Enterobacteriaceae</taxon>
        <taxon>ant endosymbionts</taxon>
        <taxon>Candidatus Blochmanniella</taxon>
    </lineage>
</organism>
<proteinExistence type="inferred from homology"/>